<comment type="function">
    <text evidence="5">Phosphoglycerate mutase-like protein lacking PGM activity, but having 2-carboxy-D-arabinitol 1-phosphate (CA1P) phosphatase activity. Can dephosphorylate the closely related compounds 2-carboxy-D-arabinitol 1,5-bisphosphate (CABP) and 2-carboxy-D-ribitol-1,5-bisphosphate(CRBP), and 2,3-diphosphoglycerate. Prevents the accumulation of D-glycero-2,3-pentodiulose-1,5-bisphosphate (PDBP) a potent inhibitor of ribulose-1,5-bisphosphate carboxylase (RuBisCO). PDBP is produced during the oxidation of ribulose-1,5-bisphosphate, the substrate of RuBisCO.</text>
</comment>
<comment type="catalytic activity">
    <reaction evidence="5">
        <text>2-carboxy-D-arabinitol 1-phosphate + H2O = 2-carboxy-D-arabinitol + phosphate</text>
        <dbReference type="Rhea" id="RHEA:17837"/>
        <dbReference type="ChEBI" id="CHEBI:15377"/>
        <dbReference type="ChEBI" id="CHEBI:43474"/>
        <dbReference type="ChEBI" id="CHEBI:58008"/>
        <dbReference type="ChEBI" id="CHEBI:58185"/>
        <dbReference type="EC" id="3.1.3.63"/>
    </reaction>
</comment>
<comment type="activity regulation">
    <text evidence="5">Inactivated by oxidized glutathione (GSSG) at pH 8.0.</text>
</comment>
<comment type="biophysicochemical properties">
    <kinetics>
        <KM evidence="5">10 uM for 2-carboxy-D-arabinitol 1-phosphate</KM>
        <KM evidence="5">2.9 uM for 2-carboxy-D-arabinitol 1,5-bisphosphate</KM>
        <KM evidence="5">4.3 uM for 2-carboxy-D-ribitol-1,5-bisphosphate</KM>
        <KM evidence="5">184 uM for 2,3-diphosphoglycerate</KM>
        <Vmax evidence="5">4.2 umol/min/mg enzyme toward 2-carboxy-D-arabinitol 1-phosphate</Vmax>
        <Vmax evidence="5">4.3 umol/min/mg enzyme toward 2-carboxy-D-arabinitol 1,5-bisphosphate</Vmax>
        <Vmax evidence="5">3.9 umol/min/mg enzyme toward 2-carboxy-D-ribitol 1,5-bisphosphate</Vmax>
        <Vmax evidence="5">6.1 umol/min/mg enzyme toward 2,3-diphosphoglycerate</Vmax>
    </kinetics>
    <phDependence>
        <text evidence="5">Optimum pH is 7.0.</text>
    </phDependence>
</comment>
<comment type="subcellular location">
    <subcellularLocation>
        <location evidence="2">Plastid</location>
        <location evidence="2">Chloroplast stroma</location>
    </subcellularLocation>
</comment>
<comment type="similarity">
    <text evidence="6">Belongs to the phosphoglycerate mutase family.</text>
</comment>
<sequence length="495" mass="53825">MLLFAPTPPPSPATAHRRPGGSAASCIRCSSVRELDRSPSRPPLPPLAEAKRVVLVRHGQSTWNADGRIQGSSDFSVLTPKGESQAETSRLMLLADSFDACFTSPLARSRRTAEIIWDTRDKDLIPDYDLREIDLYSFQGLLKHEGKEKYGALFQQWQKNPSDCSIDGHYPVRELWDRAQGCWERILTHEGKSVLVVAHNAVNQALVATSLGLGTEYFRTLLQSNCGASVLDFTPQPGGRPPSVCLNRLNQTPSSPISAESSAGRKSSKRIILVCQGATQSSSEGSLGGVGYAPLNMLGVIQAQKTAELLLDLKVNSIICSPQVAAVDTATAICEVQEAAGCLGADCVPRYVEMKNLLGLEIDDAFLTKQKSLEQIVQSGWMGGMEHQKLKTLWAQSEDAWQALVNELPEDDGAESDRVVVAIGHPAIHLGLLCRCLNLTMDYMPSFHLDDGSISVIDFPDGPKGGGIVRCTNYTAHLGRWSVPITKSTENNDEF</sequence>
<name>CA1P_WHEAT</name>
<reference key="1">
    <citation type="journal article" date="2012" name="Nature">
        <title>Analysis of the bread wheat genome using whole-genome shotgun sequencing.</title>
        <authorList>
            <person name="Brenchley R."/>
            <person name="Spannagl M."/>
            <person name="Pfeifer M."/>
            <person name="Barker G.L."/>
            <person name="D'Amore R."/>
            <person name="Allen A.M."/>
            <person name="McKenzie N."/>
            <person name="Kramer M."/>
            <person name="Kerhornou A."/>
            <person name="Bolser D."/>
            <person name="Kay S."/>
            <person name="Waite D."/>
            <person name="Trick M."/>
            <person name="Bancroft I."/>
            <person name="Gu Y."/>
            <person name="Huo N."/>
            <person name="Luo M.C."/>
            <person name="Sehgal S."/>
            <person name="Gill B."/>
            <person name="Kianian S."/>
            <person name="Anderson O."/>
            <person name="Kersey P."/>
            <person name="Dvorak J."/>
            <person name="McCombie W.R."/>
            <person name="Hall A."/>
            <person name="Mayer K.F."/>
            <person name="Edwards K.J."/>
            <person name="Bevan M.W."/>
            <person name="Hall N."/>
        </authorList>
    </citation>
    <scope>NUCLEOTIDE SEQUENCE [LARGE SCALE GENOMIC DNA]</scope>
    <source>
        <strain>cv. Chinese Spring</strain>
    </source>
</reference>
<reference key="2">
    <citation type="journal article" date="2012" name="Biochem. J.">
        <title>2-Carboxy-D-arabinitol 1-phosphate (CA1P) phosphatase: evidence for a wider role in plant Rubisco regulation.</title>
        <authorList>
            <person name="Andralojc P.J."/>
            <person name="Madgwick P.J."/>
            <person name="Tao Y."/>
            <person name="Keys A."/>
            <person name="Ward J.L."/>
            <person name="Beale M.H."/>
            <person name="Loveland J.E."/>
            <person name="Jackson P.J."/>
            <person name="Willis A.C."/>
            <person name="Gutteridge S."/>
            <person name="Parry M.A."/>
        </authorList>
    </citation>
    <scope>NUCLEOTIDE SEQUENCE [MRNA] OF 51-495</scope>
    <scope>FUNCTION</scope>
    <scope>CATALYTIC ACTIVITY</scope>
    <scope>ACTIVITY REGULATION</scope>
    <scope>BIOPHYSICOCHEMICAL PROPERTIES</scope>
</reference>
<evidence type="ECO:0000250" key="1">
    <source>
        <dbReference type="UniProtKB" id="P62707"/>
    </source>
</evidence>
<evidence type="ECO:0000250" key="2">
    <source>
        <dbReference type="UniProtKB" id="Q9FNJ9"/>
    </source>
</evidence>
<evidence type="ECO:0000255" key="3"/>
<evidence type="ECO:0000256" key="4">
    <source>
        <dbReference type="SAM" id="MobiDB-lite"/>
    </source>
</evidence>
<evidence type="ECO:0000269" key="5">
    <source>
    </source>
</evidence>
<evidence type="ECO:0000305" key="6"/>
<protein>
    <recommendedName>
        <fullName evidence="6">2-carboxy-D-arabinitol-1-phosphatase</fullName>
        <ecNumber evidence="5">3.1.3.63</ecNumber>
    </recommendedName>
</protein>
<proteinExistence type="evidence at protein level"/>
<feature type="transit peptide" description="Chloroplast" evidence="3">
    <location>
        <begin position="1"/>
        <end position="50"/>
    </location>
</feature>
<feature type="chain" id="PRO_0000430638" description="2-carboxy-D-arabinitol-1-phosphatase" evidence="3">
    <location>
        <begin position="51"/>
        <end position="495"/>
    </location>
</feature>
<feature type="region of interest" description="Disordered" evidence="4">
    <location>
        <begin position="1"/>
        <end position="23"/>
    </location>
</feature>
<feature type="compositionally biased region" description="Pro residues" evidence="4">
    <location>
        <begin position="1"/>
        <end position="12"/>
    </location>
</feature>
<feature type="active site" description="Tele-phosphohistidine intermediate" evidence="1">
    <location>
        <position position="58"/>
    </location>
</feature>
<feature type="active site" description="Proton donor/acceptor" evidence="1">
    <location>
        <position position="132"/>
    </location>
</feature>
<keyword id="KW-0150">Chloroplast</keyword>
<keyword id="KW-0378">Hydrolase</keyword>
<keyword id="KW-0934">Plastid</keyword>
<keyword id="KW-1185">Reference proteome</keyword>
<keyword id="KW-0809">Transit peptide</keyword>
<dbReference type="EC" id="3.1.3.63" evidence="5"/>
<dbReference type="EMBL" id="HE603918">
    <property type="protein sequence ID" value="CCE25835.1"/>
    <property type="molecule type" value="mRNA"/>
</dbReference>
<dbReference type="RefSeq" id="NP_001412220.1">
    <property type="nucleotide sequence ID" value="NM_001425291.1"/>
</dbReference>
<dbReference type="SMR" id="W5EP13"/>
<dbReference type="STRING" id="4565.W5EP13"/>
<dbReference type="PaxDb" id="4565-Traes_4DS_1860220B9.1"/>
<dbReference type="EnsemblPlants" id="TraesARI4D03G02494090.1">
    <property type="protein sequence ID" value="TraesARI4D03G02494090.1"/>
    <property type="gene ID" value="TraesARI4D03G02494090"/>
</dbReference>
<dbReference type="EnsemblPlants" id="TraesCAD_scaffold_100849_01G000200.1">
    <property type="protein sequence ID" value="TraesCAD_scaffold_100849_01G000200.1"/>
    <property type="gene ID" value="TraesCAD_scaffold_100849_01G000200"/>
</dbReference>
<dbReference type="EnsemblPlants" id="TraesCLE_scaffold_094133_01G000200.1">
    <property type="protein sequence ID" value="TraesCLE_scaffold_094133_01G000200.1"/>
    <property type="gene ID" value="TraesCLE_scaffold_094133_01G000200"/>
</dbReference>
<dbReference type="EnsemblPlants" id="TraesCS4D02G129300.1">
    <property type="protein sequence ID" value="TraesCS4D02G129300.1"/>
    <property type="gene ID" value="TraesCS4D02G129300"/>
</dbReference>
<dbReference type="EnsemblPlants" id="TraesCS4D03G0257700.2">
    <property type="protein sequence ID" value="TraesCS4D03G0257700.2.CDS"/>
    <property type="gene ID" value="TraesCS4D03G0257700"/>
</dbReference>
<dbReference type="EnsemblPlants" id="TraesJAG4D03G02452900.1">
    <property type="protein sequence ID" value="TraesJAG4D03G02452900.1"/>
    <property type="gene ID" value="TraesJAG4D03G02452900"/>
</dbReference>
<dbReference type="EnsemblPlants" id="TraesJUL4D03G02474450.1">
    <property type="protein sequence ID" value="TraesJUL4D03G02474450.1"/>
    <property type="gene ID" value="TraesJUL4D03G02474450"/>
</dbReference>
<dbReference type="EnsemblPlants" id="TraesKAR4D01G0085840.1">
    <property type="protein sequence ID" value="cds.TraesKAR4D01G0085840.1"/>
    <property type="gene ID" value="TraesKAR4D01G0085840"/>
</dbReference>
<dbReference type="EnsemblPlants" id="TraesLAC4D03G02408700.1">
    <property type="protein sequence ID" value="TraesLAC4D03G02408700.1"/>
    <property type="gene ID" value="TraesLAC4D03G02408700"/>
</dbReference>
<dbReference type="EnsemblPlants" id="TraesLDM4D03G02457690.1">
    <property type="protein sequence ID" value="TraesLDM4D03G02457690.1"/>
    <property type="gene ID" value="TraesLDM4D03G02457690"/>
</dbReference>
<dbReference type="EnsemblPlants" id="TraesMAC4D03G02453700.1">
    <property type="protein sequence ID" value="TraesMAC4D03G02453700.1"/>
    <property type="gene ID" value="TraesMAC4D03G02453700"/>
</dbReference>
<dbReference type="EnsemblPlants" id="TraesNOR4D03G02473180.1">
    <property type="protein sequence ID" value="TraesNOR4D03G02473180.1"/>
    <property type="gene ID" value="TraesNOR4D03G02473180"/>
</dbReference>
<dbReference type="EnsemblPlants" id="TraesPARA_EIv1.0_1434650.1">
    <property type="protein sequence ID" value="TraesPARA_EIv1.0_1434650.1.CDS"/>
    <property type="gene ID" value="TraesPARA_EIv1.0_1434650"/>
</dbReference>
<dbReference type="EnsemblPlants" id="TraesROB_scaffold_002225_01G000300.1">
    <property type="protein sequence ID" value="TraesROB_scaffold_002225_01G000300.1"/>
    <property type="gene ID" value="TraesROB_scaffold_002225_01G000300"/>
</dbReference>
<dbReference type="EnsemblPlants" id="TraesSTA4D03G02450770.1">
    <property type="protein sequence ID" value="TraesSTA4D03G02450770.1"/>
    <property type="gene ID" value="TraesSTA4D03G02450770"/>
</dbReference>
<dbReference type="EnsemblPlants" id="TraesSYM4D03G02482890.1">
    <property type="protein sequence ID" value="TraesSYM4D03G02482890.1"/>
    <property type="gene ID" value="TraesSYM4D03G02482890"/>
</dbReference>
<dbReference type="EnsemblPlants" id="TraesWEE_scaffold_081482_01G000300.1">
    <property type="protein sequence ID" value="TraesWEE_scaffold_081482_01G000300.1"/>
    <property type="gene ID" value="TraesWEE_scaffold_081482_01G000300"/>
</dbReference>
<dbReference type="GeneID" id="100859952"/>
<dbReference type="Gramene" id="TraesARI4D03G02494090.1">
    <property type="protein sequence ID" value="TraesARI4D03G02494090.1"/>
    <property type="gene ID" value="TraesARI4D03G02494090"/>
</dbReference>
<dbReference type="Gramene" id="TraesCAD_scaffold_100849_01G000200.1">
    <property type="protein sequence ID" value="TraesCAD_scaffold_100849_01G000200.1"/>
    <property type="gene ID" value="TraesCAD_scaffold_100849_01G000200"/>
</dbReference>
<dbReference type="Gramene" id="TraesCLE_scaffold_094133_01G000200.1">
    <property type="protein sequence ID" value="TraesCLE_scaffold_094133_01G000200.1"/>
    <property type="gene ID" value="TraesCLE_scaffold_094133_01G000200"/>
</dbReference>
<dbReference type="Gramene" id="TraesCS4D02G129300.1">
    <property type="protein sequence ID" value="TraesCS4D02G129300.1"/>
    <property type="gene ID" value="TraesCS4D02G129300"/>
</dbReference>
<dbReference type="Gramene" id="TraesCS4D03G0257700.2">
    <property type="protein sequence ID" value="TraesCS4D03G0257700.2.CDS"/>
    <property type="gene ID" value="TraesCS4D03G0257700"/>
</dbReference>
<dbReference type="Gramene" id="TraesJAG4D03G02452900.1">
    <property type="protein sequence ID" value="TraesJAG4D03G02452900.1"/>
    <property type="gene ID" value="TraesJAG4D03G02452900"/>
</dbReference>
<dbReference type="Gramene" id="TraesJUL4D03G02474450.1">
    <property type="protein sequence ID" value="TraesJUL4D03G02474450.1"/>
    <property type="gene ID" value="TraesJUL4D03G02474450"/>
</dbReference>
<dbReference type="Gramene" id="TraesKAR4D01G0085840.1">
    <property type="protein sequence ID" value="cds.TraesKAR4D01G0085840.1"/>
    <property type="gene ID" value="TraesKAR4D01G0085840"/>
</dbReference>
<dbReference type="Gramene" id="TraesLAC4D03G02408700.1">
    <property type="protein sequence ID" value="TraesLAC4D03G02408700.1"/>
    <property type="gene ID" value="TraesLAC4D03G02408700"/>
</dbReference>
<dbReference type="Gramene" id="TraesLDM4D03G02457690.1">
    <property type="protein sequence ID" value="TraesLDM4D03G02457690.1"/>
    <property type="gene ID" value="TraesLDM4D03G02457690"/>
</dbReference>
<dbReference type="Gramene" id="TraesMAC4D03G02453700.1">
    <property type="protein sequence ID" value="TraesMAC4D03G02453700.1"/>
    <property type="gene ID" value="TraesMAC4D03G02453700"/>
</dbReference>
<dbReference type="Gramene" id="TraesNOR4D03G02473180.1">
    <property type="protein sequence ID" value="TraesNOR4D03G02473180.1"/>
    <property type="gene ID" value="TraesNOR4D03G02473180"/>
</dbReference>
<dbReference type="Gramene" id="TraesPARA_EIv1.0_1434650.1">
    <property type="protein sequence ID" value="TraesPARA_EIv1.0_1434650.1.CDS"/>
    <property type="gene ID" value="TraesPARA_EIv1.0_1434650"/>
</dbReference>
<dbReference type="Gramene" id="TraesROB_scaffold_002225_01G000300.1">
    <property type="protein sequence ID" value="TraesROB_scaffold_002225_01G000300.1"/>
    <property type="gene ID" value="TraesROB_scaffold_002225_01G000300"/>
</dbReference>
<dbReference type="Gramene" id="TraesSTA4D03G02450770.1">
    <property type="protein sequence ID" value="TraesSTA4D03G02450770.1"/>
    <property type="gene ID" value="TraesSTA4D03G02450770"/>
</dbReference>
<dbReference type="Gramene" id="TraesSYM4D03G02482890.1">
    <property type="protein sequence ID" value="TraesSYM4D03G02482890.1"/>
    <property type="gene ID" value="TraesSYM4D03G02482890"/>
</dbReference>
<dbReference type="Gramene" id="TraesWEE_scaffold_081482_01G000300.1">
    <property type="protein sequence ID" value="TraesWEE_scaffold_081482_01G000300.1"/>
    <property type="gene ID" value="TraesWEE_scaffold_081482_01G000300"/>
</dbReference>
<dbReference type="eggNOG" id="KOG0235">
    <property type="taxonomic scope" value="Eukaryota"/>
</dbReference>
<dbReference type="HOGENOM" id="CLU_035286_0_0_1"/>
<dbReference type="OMA" id="HDAVNKT"/>
<dbReference type="OrthoDB" id="354304at2759"/>
<dbReference type="Proteomes" id="UP000019116">
    <property type="component" value="Chromosome 4D"/>
</dbReference>
<dbReference type="ExpressionAtlas" id="W5EP13">
    <property type="expression patterns" value="baseline and differential"/>
</dbReference>
<dbReference type="GO" id="GO:0009570">
    <property type="term" value="C:chloroplast stroma"/>
    <property type="evidence" value="ECO:0000314"/>
    <property type="project" value="UniProtKB"/>
</dbReference>
<dbReference type="GO" id="GO:0047538">
    <property type="term" value="F:2-carboxy-D-arabinitol-1-phosphatase activity"/>
    <property type="evidence" value="ECO:0000314"/>
    <property type="project" value="UniProtKB"/>
</dbReference>
<dbReference type="GO" id="GO:0016791">
    <property type="term" value="F:phosphatase activity"/>
    <property type="evidence" value="ECO:0000318"/>
    <property type="project" value="GO_Central"/>
</dbReference>
<dbReference type="GO" id="GO:0016311">
    <property type="term" value="P:dephosphorylation"/>
    <property type="evidence" value="ECO:0000314"/>
    <property type="project" value="UniProtKB"/>
</dbReference>
<dbReference type="CDD" id="cd07067">
    <property type="entry name" value="HP_PGM_like"/>
    <property type="match status" value="2"/>
</dbReference>
<dbReference type="FunFam" id="3.40.50.1240:FF:000018">
    <property type="entry name" value="Phosphoglycerate mutase"/>
    <property type="match status" value="1"/>
</dbReference>
<dbReference type="FunFam" id="3.40.50.1240:FF:000028">
    <property type="entry name" value="Putative 2-carboxy-D-arabinitol-1-phosphatase"/>
    <property type="match status" value="1"/>
</dbReference>
<dbReference type="Gene3D" id="3.40.50.1240">
    <property type="entry name" value="Phosphoglycerate mutase-like"/>
    <property type="match status" value="2"/>
</dbReference>
<dbReference type="InterPro" id="IPR013078">
    <property type="entry name" value="His_Pase_superF_clade-1"/>
</dbReference>
<dbReference type="InterPro" id="IPR029033">
    <property type="entry name" value="His_PPase_superfam"/>
</dbReference>
<dbReference type="InterPro" id="IPR001345">
    <property type="entry name" value="PG/BPGM_mutase_AS"/>
</dbReference>
<dbReference type="InterPro" id="IPR050275">
    <property type="entry name" value="PGM_Phosphatase"/>
</dbReference>
<dbReference type="PANTHER" id="PTHR48100">
    <property type="entry name" value="BROAD-SPECIFICITY PHOSPHATASE YOR283W-RELATED"/>
    <property type="match status" value="1"/>
</dbReference>
<dbReference type="Pfam" id="PF00300">
    <property type="entry name" value="His_Phos_1"/>
    <property type="match status" value="2"/>
</dbReference>
<dbReference type="SMART" id="SM00855">
    <property type="entry name" value="PGAM"/>
    <property type="match status" value="2"/>
</dbReference>
<dbReference type="SUPFAM" id="SSF53254">
    <property type="entry name" value="Phosphoglycerate mutase-like"/>
    <property type="match status" value="2"/>
</dbReference>
<dbReference type="PROSITE" id="PS00175">
    <property type="entry name" value="PG_MUTASE"/>
    <property type="match status" value="1"/>
</dbReference>
<organism>
    <name type="scientific">Triticum aestivum</name>
    <name type="common">Wheat</name>
    <dbReference type="NCBI Taxonomy" id="4565"/>
    <lineage>
        <taxon>Eukaryota</taxon>
        <taxon>Viridiplantae</taxon>
        <taxon>Streptophyta</taxon>
        <taxon>Embryophyta</taxon>
        <taxon>Tracheophyta</taxon>
        <taxon>Spermatophyta</taxon>
        <taxon>Magnoliopsida</taxon>
        <taxon>Liliopsida</taxon>
        <taxon>Poales</taxon>
        <taxon>Poaceae</taxon>
        <taxon>BOP clade</taxon>
        <taxon>Pooideae</taxon>
        <taxon>Triticodae</taxon>
        <taxon>Triticeae</taxon>
        <taxon>Triticinae</taxon>
        <taxon>Triticum</taxon>
    </lineage>
</organism>
<accession>W5EP13</accession>
<accession>G4VUY9</accession>